<accession>Q6LLH1</accession>
<protein>
    <recommendedName>
        <fullName evidence="1">Bifunctional protein GlmU</fullName>
    </recommendedName>
    <domain>
        <recommendedName>
            <fullName evidence="1">UDP-N-acetylglucosamine pyrophosphorylase</fullName>
            <ecNumber evidence="1">2.7.7.23</ecNumber>
        </recommendedName>
        <alternativeName>
            <fullName evidence="1">N-acetylglucosamine-1-phosphate uridyltransferase</fullName>
        </alternativeName>
    </domain>
    <domain>
        <recommendedName>
            <fullName evidence="1">Glucosamine-1-phosphate N-acetyltransferase</fullName>
            <ecNumber evidence="1">2.3.1.157</ecNumber>
        </recommendedName>
    </domain>
</protein>
<dbReference type="EC" id="2.7.7.23" evidence="1"/>
<dbReference type="EC" id="2.3.1.157" evidence="1"/>
<dbReference type="EMBL" id="CR378674">
    <property type="protein sequence ID" value="CAG21857.1"/>
    <property type="molecule type" value="Genomic_DNA"/>
</dbReference>
<dbReference type="RefSeq" id="WP_011220093.1">
    <property type="nucleotide sequence ID" value="NC_006370.1"/>
</dbReference>
<dbReference type="SMR" id="Q6LLH1"/>
<dbReference type="STRING" id="298386.PBPRA3601"/>
<dbReference type="KEGG" id="ppr:PBPRA3601"/>
<dbReference type="eggNOG" id="COG1207">
    <property type="taxonomic scope" value="Bacteria"/>
</dbReference>
<dbReference type="HOGENOM" id="CLU_029499_15_2_6"/>
<dbReference type="UniPathway" id="UPA00113">
    <property type="reaction ID" value="UER00532"/>
</dbReference>
<dbReference type="UniPathway" id="UPA00113">
    <property type="reaction ID" value="UER00533"/>
</dbReference>
<dbReference type="UniPathway" id="UPA00973"/>
<dbReference type="Proteomes" id="UP000000593">
    <property type="component" value="Chromosome 1"/>
</dbReference>
<dbReference type="GO" id="GO:0005737">
    <property type="term" value="C:cytoplasm"/>
    <property type="evidence" value="ECO:0007669"/>
    <property type="project" value="UniProtKB-SubCell"/>
</dbReference>
<dbReference type="GO" id="GO:0016020">
    <property type="term" value="C:membrane"/>
    <property type="evidence" value="ECO:0007669"/>
    <property type="project" value="GOC"/>
</dbReference>
<dbReference type="GO" id="GO:0019134">
    <property type="term" value="F:glucosamine-1-phosphate N-acetyltransferase activity"/>
    <property type="evidence" value="ECO:0007669"/>
    <property type="project" value="UniProtKB-UniRule"/>
</dbReference>
<dbReference type="GO" id="GO:0000287">
    <property type="term" value="F:magnesium ion binding"/>
    <property type="evidence" value="ECO:0007669"/>
    <property type="project" value="UniProtKB-UniRule"/>
</dbReference>
<dbReference type="GO" id="GO:0003977">
    <property type="term" value="F:UDP-N-acetylglucosamine diphosphorylase activity"/>
    <property type="evidence" value="ECO:0007669"/>
    <property type="project" value="UniProtKB-UniRule"/>
</dbReference>
<dbReference type="GO" id="GO:0000902">
    <property type="term" value="P:cell morphogenesis"/>
    <property type="evidence" value="ECO:0007669"/>
    <property type="project" value="UniProtKB-UniRule"/>
</dbReference>
<dbReference type="GO" id="GO:0071555">
    <property type="term" value="P:cell wall organization"/>
    <property type="evidence" value="ECO:0007669"/>
    <property type="project" value="UniProtKB-KW"/>
</dbReference>
<dbReference type="GO" id="GO:0009245">
    <property type="term" value="P:lipid A biosynthetic process"/>
    <property type="evidence" value="ECO:0007669"/>
    <property type="project" value="UniProtKB-UniRule"/>
</dbReference>
<dbReference type="GO" id="GO:0009252">
    <property type="term" value="P:peptidoglycan biosynthetic process"/>
    <property type="evidence" value="ECO:0007669"/>
    <property type="project" value="UniProtKB-UniRule"/>
</dbReference>
<dbReference type="GO" id="GO:0008360">
    <property type="term" value="P:regulation of cell shape"/>
    <property type="evidence" value="ECO:0007669"/>
    <property type="project" value="UniProtKB-KW"/>
</dbReference>
<dbReference type="GO" id="GO:0006048">
    <property type="term" value="P:UDP-N-acetylglucosamine biosynthetic process"/>
    <property type="evidence" value="ECO:0007669"/>
    <property type="project" value="UniProtKB-UniPathway"/>
</dbReference>
<dbReference type="CDD" id="cd02540">
    <property type="entry name" value="GT2_GlmU_N_bac"/>
    <property type="match status" value="1"/>
</dbReference>
<dbReference type="CDD" id="cd03353">
    <property type="entry name" value="LbH_GlmU_C"/>
    <property type="match status" value="1"/>
</dbReference>
<dbReference type="FunFam" id="3.90.550.10:FF:000006">
    <property type="entry name" value="Bifunctional protein GlmU"/>
    <property type="match status" value="1"/>
</dbReference>
<dbReference type="Gene3D" id="2.160.10.10">
    <property type="entry name" value="Hexapeptide repeat proteins"/>
    <property type="match status" value="1"/>
</dbReference>
<dbReference type="Gene3D" id="3.90.550.10">
    <property type="entry name" value="Spore Coat Polysaccharide Biosynthesis Protein SpsA, Chain A"/>
    <property type="match status" value="1"/>
</dbReference>
<dbReference type="HAMAP" id="MF_01631">
    <property type="entry name" value="GlmU"/>
    <property type="match status" value="1"/>
</dbReference>
<dbReference type="InterPro" id="IPR005882">
    <property type="entry name" value="Bifunctional_GlmU"/>
</dbReference>
<dbReference type="InterPro" id="IPR050065">
    <property type="entry name" value="GlmU-like"/>
</dbReference>
<dbReference type="InterPro" id="IPR038009">
    <property type="entry name" value="GlmU_C_LbH"/>
</dbReference>
<dbReference type="InterPro" id="IPR001451">
    <property type="entry name" value="Hexapep"/>
</dbReference>
<dbReference type="InterPro" id="IPR018357">
    <property type="entry name" value="Hexapep_transf_CS"/>
</dbReference>
<dbReference type="InterPro" id="IPR025877">
    <property type="entry name" value="MobA-like_NTP_Trfase"/>
</dbReference>
<dbReference type="InterPro" id="IPR029044">
    <property type="entry name" value="Nucleotide-diphossugar_trans"/>
</dbReference>
<dbReference type="InterPro" id="IPR011004">
    <property type="entry name" value="Trimer_LpxA-like_sf"/>
</dbReference>
<dbReference type="NCBIfam" id="TIGR01173">
    <property type="entry name" value="glmU"/>
    <property type="match status" value="1"/>
</dbReference>
<dbReference type="NCBIfam" id="NF006986">
    <property type="entry name" value="PRK09451.1"/>
    <property type="match status" value="1"/>
</dbReference>
<dbReference type="PANTHER" id="PTHR43584:SF3">
    <property type="entry name" value="BIFUNCTIONAL PROTEIN GLMU"/>
    <property type="match status" value="1"/>
</dbReference>
<dbReference type="PANTHER" id="PTHR43584">
    <property type="entry name" value="NUCLEOTIDYL TRANSFERASE"/>
    <property type="match status" value="1"/>
</dbReference>
<dbReference type="Pfam" id="PF00132">
    <property type="entry name" value="Hexapep"/>
    <property type="match status" value="1"/>
</dbReference>
<dbReference type="Pfam" id="PF12804">
    <property type="entry name" value="NTP_transf_3"/>
    <property type="match status" value="1"/>
</dbReference>
<dbReference type="SUPFAM" id="SSF53448">
    <property type="entry name" value="Nucleotide-diphospho-sugar transferases"/>
    <property type="match status" value="1"/>
</dbReference>
<dbReference type="SUPFAM" id="SSF51161">
    <property type="entry name" value="Trimeric LpxA-like enzymes"/>
    <property type="match status" value="1"/>
</dbReference>
<dbReference type="PROSITE" id="PS00101">
    <property type="entry name" value="HEXAPEP_TRANSFERASES"/>
    <property type="match status" value="1"/>
</dbReference>
<sequence length="453" mass="48494">MSFSAVILAAGKGTRMYSNVPKVLHTLAGKPMAKHVIDTCSDLGASHIHLVYGHGGDTMQQVLADEPVSWILQAEQLGTGHAVNQASSGLADNEKVLILYGDVPLISGDTLTNLLDAQPDGGIALLTVVLDNPVGYGRIVRRNGPVVAIVEQKDASEEQKLIKEINTGVMVANGGDLKRWLGQLKNENSQGEYYLTDIIAIAHDEGRAVEAVHPVNPIEVEGVNNRIQLARLERAYQAMQAERLLEQGVMLRDPSRFDLRGKLQCGTDVEIDVNVIIEGNVSIGNNVLIGTGCVLKDCEIDDNSVIRPYSVIEGATVGEDCTVGPFTRLRPGAELVGDSHVGNFVEMKKSRLGRGSKANHLTYLGDADIGDRVNIGAGTITCNYDGVNKFKTEIGDDVFVGSDTQLIAPVKIGKGATIGAGATINRDIGEGELVITRAPARTIKGWKRPVKQK</sequence>
<reference key="1">
    <citation type="journal article" date="2005" name="Science">
        <title>Life at depth: Photobacterium profundum genome sequence and expression analysis.</title>
        <authorList>
            <person name="Vezzi A."/>
            <person name="Campanaro S."/>
            <person name="D'Angelo M."/>
            <person name="Simonato F."/>
            <person name="Vitulo N."/>
            <person name="Lauro F.M."/>
            <person name="Cestaro A."/>
            <person name="Malacrida G."/>
            <person name="Simionati B."/>
            <person name="Cannata N."/>
            <person name="Romualdi C."/>
            <person name="Bartlett D.H."/>
            <person name="Valle G."/>
        </authorList>
    </citation>
    <scope>NUCLEOTIDE SEQUENCE [LARGE SCALE GENOMIC DNA]</scope>
    <source>
        <strain>ATCC BAA-1253 / SS9</strain>
    </source>
</reference>
<gene>
    <name evidence="1" type="primary">glmU</name>
    <name type="ordered locus">PBPRA3601</name>
</gene>
<evidence type="ECO:0000255" key="1">
    <source>
        <dbReference type="HAMAP-Rule" id="MF_01631"/>
    </source>
</evidence>
<proteinExistence type="inferred from homology"/>
<keyword id="KW-0012">Acyltransferase</keyword>
<keyword id="KW-0133">Cell shape</keyword>
<keyword id="KW-0961">Cell wall biogenesis/degradation</keyword>
<keyword id="KW-0963">Cytoplasm</keyword>
<keyword id="KW-0460">Magnesium</keyword>
<keyword id="KW-0479">Metal-binding</keyword>
<keyword id="KW-0511">Multifunctional enzyme</keyword>
<keyword id="KW-0548">Nucleotidyltransferase</keyword>
<keyword id="KW-0573">Peptidoglycan synthesis</keyword>
<keyword id="KW-1185">Reference proteome</keyword>
<keyword id="KW-0677">Repeat</keyword>
<keyword id="KW-0808">Transferase</keyword>
<organism>
    <name type="scientific">Photobacterium profundum (strain SS9)</name>
    <dbReference type="NCBI Taxonomy" id="298386"/>
    <lineage>
        <taxon>Bacteria</taxon>
        <taxon>Pseudomonadati</taxon>
        <taxon>Pseudomonadota</taxon>
        <taxon>Gammaproteobacteria</taxon>
        <taxon>Vibrionales</taxon>
        <taxon>Vibrionaceae</taxon>
        <taxon>Photobacterium</taxon>
    </lineage>
</organism>
<name>GLMU_PHOPR</name>
<feature type="chain" id="PRO_0000233813" description="Bifunctional protein GlmU">
    <location>
        <begin position="1"/>
        <end position="453"/>
    </location>
</feature>
<feature type="region of interest" description="Pyrophosphorylase" evidence="1">
    <location>
        <begin position="1"/>
        <end position="226"/>
    </location>
</feature>
<feature type="region of interest" description="Linker" evidence="1">
    <location>
        <begin position="227"/>
        <end position="247"/>
    </location>
</feature>
<feature type="region of interest" description="N-acetyltransferase" evidence="1">
    <location>
        <begin position="248"/>
        <end position="453"/>
    </location>
</feature>
<feature type="active site" description="Proton acceptor" evidence="1">
    <location>
        <position position="360"/>
    </location>
</feature>
<feature type="binding site" evidence="1">
    <location>
        <begin position="8"/>
        <end position="11"/>
    </location>
    <ligand>
        <name>UDP-N-acetyl-alpha-D-glucosamine</name>
        <dbReference type="ChEBI" id="CHEBI:57705"/>
    </ligand>
</feature>
<feature type="binding site" evidence="1">
    <location>
        <position position="22"/>
    </location>
    <ligand>
        <name>UDP-N-acetyl-alpha-D-glucosamine</name>
        <dbReference type="ChEBI" id="CHEBI:57705"/>
    </ligand>
</feature>
<feature type="binding site" evidence="1">
    <location>
        <position position="73"/>
    </location>
    <ligand>
        <name>UDP-N-acetyl-alpha-D-glucosamine</name>
        <dbReference type="ChEBI" id="CHEBI:57705"/>
    </ligand>
</feature>
<feature type="binding site" evidence="1">
    <location>
        <begin position="78"/>
        <end position="79"/>
    </location>
    <ligand>
        <name>UDP-N-acetyl-alpha-D-glucosamine</name>
        <dbReference type="ChEBI" id="CHEBI:57705"/>
    </ligand>
</feature>
<feature type="binding site" evidence="1">
    <location>
        <begin position="100"/>
        <end position="102"/>
    </location>
    <ligand>
        <name>UDP-N-acetyl-alpha-D-glucosamine</name>
        <dbReference type="ChEBI" id="CHEBI:57705"/>
    </ligand>
</feature>
<feature type="binding site" evidence="1">
    <location>
        <position position="102"/>
    </location>
    <ligand>
        <name>Mg(2+)</name>
        <dbReference type="ChEBI" id="CHEBI:18420"/>
    </ligand>
</feature>
<feature type="binding site" evidence="1">
    <location>
        <position position="137"/>
    </location>
    <ligand>
        <name>UDP-N-acetyl-alpha-D-glucosamine</name>
        <dbReference type="ChEBI" id="CHEBI:57705"/>
    </ligand>
</feature>
<feature type="binding site" evidence="1">
    <location>
        <position position="151"/>
    </location>
    <ligand>
        <name>UDP-N-acetyl-alpha-D-glucosamine</name>
        <dbReference type="ChEBI" id="CHEBI:57705"/>
    </ligand>
</feature>
<feature type="binding site" evidence="1">
    <location>
        <position position="166"/>
    </location>
    <ligand>
        <name>UDP-N-acetyl-alpha-D-glucosamine</name>
        <dbReference type="ChEBI" id="CHEBI:57705"/>
    </ligand>
</feature>
<feature type="binding site" evidence="1">
    <location>
        <position position="224"/>
    </location>
    <ligand>
        <name>Mg(2+)</name>
        <dbReference type="ChEBI" id="CHEBI:18420"/>
    </ligand>
</feature>
<feature type="binding site" evidence="1">
    <location>
        <position position="224"/>
    </location>
    <ligand>
        <name>UDP-N-acetyl-alpha-D-glucosamine</name>
        <dbReference type="ChEBI" id="CHEBI:57705"/>
    </ligand>
</feature>
<feature type="binding site" evidence="1">
    <location>
        <position position="330"/>
    </location>
    <ligand>
        <name>UDP-N-acetyl-alpha-D-glucosamine</name>
        <dbReference type="ChEBI" id="CHEBI:57705"/>
    </ligand>
</feature>
<feature type="binding site" evidence="1">
    <location>
        <position position="348"/>
    </location>
    <ligand>
        <name>UDP-N-acetyl-alpha-D-glucosamine</name>
        <dbReference type="ChEBI" id="CHEBI:57705"/>
    </ligand>
</feature>
<feature type="binding site" evidence="1">
    <location>
        <position position="363"/>
    </location>
    <ligand>
        <name>UDP-N-acetyl-alpha-D-glucosamine</name>
        <dbReference type="ChEBI" id="CHEBI:57705"/>
    </ligand>
</feature>
<feature type="binding site" evidence="1">
    <location>
        <position position="374"/>
    </location>
    <ligand>
        <name>UDP-N-acetyl-alpha-D-glucosamine</name>
        <dbReference type="ChEBI" id="CHEBI:57705"/>
    </ligand>
</feature>
<feature type="binding site" evidence="1">
    <location>
        <position position="377"/>
    </location>
    <ligand>
        <name>acetyl-CoA</name>
        <dbReference type="ChEBI" id="CHEBI:57288"/>
    </ligand>
</feature>
<feature type="binding site" evidence="1">
    <location>
        <begin position="383"/>
        <end position="384"/>
    </location>
    <ligand>
        <name>acetyl-CoA</name>
        <dbReference type="ChEBI" id="CHEBI:57288"/>
    </ligand>
</feature>
<feature type="binding site" evidence="1">
    <location>
        <position position="402"/>
    </location>
    <ligand>
        <name>acetyl-CoA</name>
        <dbReference type="ChEBI" id="CHEBI:57288"/>
    </ligand>
</feature>
<feature type="binding site" evidence="1">
    <location>
        <position position="420"/>
    </location>
    <ligand>
        <name>acetyl-CoA</name>
        <dbReference type="ChEBI" id="CHEBI:57288"/>
    </ligand>
</feature>
<feature type="binding site" evidence="1">
    <location>
        <position position="437"/>
    </location>
    <ligand>
        <name>acetyl-CoA</name>
        <dbReference type="ChEBI" id="CHEBI:57288"/>
    </ligand>
</feature>
<comment type="function">
    <text evidence="1">Catalyzes the last two sequential reactions in the de novo biosynthetic pathway for UDP-N-acetylglucosamine (UDP-GlcNAc). The C-terminal domain catalyzes the transfer of acetyl group from acetyl coenzyme A to glucosamine-1-phosphate (GlcN-1-P) to produce N-acetylglucosamine-1-phosphate (GlcNAc-1-P), which is converted into UDP-GlcNAc by the transfer of uridine 5-monophosphate (from uridine 5-triphosphate), a reaction catalyzed by the N-terminal domain.</text>
</comment>
<comment type="catalytic activity">
    <reaction evidence="1">
        <text>alpha-D-glucosamine 1-phosphate + acetyl-CoA = N-acetyl-alpha-D-glucosamine 1-phosphate + CoA + H(+)</text>
        <dbReference type="Rhea" id="RHEA:13725"/>
        <dbReference type="ChEBI" id="CHEBI:15378"/>
        <dbReference type="ChEBI" id="CHEBI:57287"/>
        <dbReference type="ChEBI" id="CHEBI:57288"/>
        <dbReference type="ChEBI" id="CHEBI:57776"/>
        <dbReference type="ChEBI" id="CHEBI:58516"/>
        <dbReference type="EC" id="2.3.1.157"/>
    </reaction>
</comment>
<comment type="catalytic activity">
    <reaction evidence="1">
        <text>N-acetyl-alpha-D-glucosamine 1-phosphate + UTP + H(+) = UDP-N-acetyl-alpha-D-glucosamine + diphosphate</text>
        <dbReference type="Rhea" id="RHEA:13509"/>
        <dbReference type="ChEBI" id="CHEBI:15378"/>
        <dbReference type="ChEBI" id="CHEBI:33019"/>
        <dbReference type="ChEBI" id="CHEBI:46398"/>
        <dbReference type="ChEBI" id="CHEBI:57705"/>
        <dbReference type="ChEBI" id="CHEBI:57776"/>
        <dbReference type="EC" id="2.7.7.23"/>
    </reaction>
</comment>
<comment type="cofactor">
    <cofactor evidence="1">
        <name>Mg(2+)</name>
        <dbReference type="ChEBI" id="CHEBI:18420"/>
    </cofactor>
    <text evidence="1">Binds 1 Mg(2+) ion per subunit.</text>
</comment>
<comment type="pathway">
    <text evidence="1">Nucleotide-sugar biosynthesis; UDP-N-acetyl-alpha-D-glucosamine biosynthesis; N-acetyl-alpha-D-glucosamine 1-phosphate from alpha-D-glucosamine 6-phosphate (route II): step 2/2.</text>
</comment>
<comment type="pathway">
    <text evidence="1">Nucleotide-sugar biosynthesis; UDP-N-acetyl-alpha-D-glucosamine biosynthesis; UDP-N-acetyl-alpha-D-glucosamine from N-acetyl-alpha-D-glucosamine 1-phosphate: step 1/1.</text>
</comment>
<comment type="pathway">
    <text evidence="1">Bacterial outer membrane biogenesis; LPS lipid A biosynthesis.</text>
</comment>
<comment type="subunit">
    <text evidence="1">Homotrimer.</text>
</comment>
<comment type="subcellular location">
    <subcellularLocation>
        <location evidence="1">Cytoplasm</location>
    </subcellularLocation>
</comment>
<comment type="similarity">
    <text evidence="1">In the N-terminal section; belongs to the N-acetylglucosamine-1-phosphate uridyltransferase family.</text>
</comment>
<comment type="similarity">
    <text evidence="1">In the C-terminal section; belongs to the transferase hexapeptide repeat family.</text>
</comment>